<name>MC4R_DANRE</name>
<feature type="chain" id="PRO_0000424026" description="Melanocortin receptor 4">
    <location>
        <begin position="1"/>
        <end position="326"/>
    </location>
</feature>
<feature type="topological domain" description="Extracellular" evidence="2">
    <location>
        <begin position="1"/>
        <end position="46"/>
    </location>
</feature>
<feature type="transmembrane region" description="Helical; Name=1" evidence="2">
    <location>
        <begin position="47"/>
        <end position="67"/>
    </location>
</feature>
<feature type="topological domain" description="Cytoplasmic" evidence="2">
    <location>
        <begin position="68"/>
        <end position="71"/>
    </location>
</feature>
<feature type="transmembrane region" description="Helical; Name=2" evidence="2">
    <location>
        <begin position="72"/>
        <end position="92"/>
    </location>
</feature>
<feature type="topological domain" description="Extracellular" evidence="2">
    <location>
        <begin position="93"/>
        <end position="121"/>
    </location>
</feature>
<feature type="transmembrane region" description="Helical; Name=3" evidence="2">
    <location>
        <begin position="122"/>
        <end position="142"/>
    </location>
</feature>
<feature type="topological domain" description="Cytoplasmic" evidence="2">
    <location>
        <begin position="143"/>
        <end position="163"/>
    </location>
</feature>
<feature type="transmembrane region" description="Helical; Name=4" evidence="2">
    <location>
        <begin position="164"/>
        <end position="184"/>
    </location>
</feature>
<feature type="topological domain" description="Extracellular" evidence="2">
    <location>
        <begin position="185"/>
        <end position="190"/>
    </location>
</feature>
<feature type="transmembrane region" description="Helical; Name=5" evidence="2">
    <location>
        <begin position="191"/>
        <end position="211"/>
    </location>
</feature>
<feature type="topological domain" description="Cytoplasmic" evidence="2">
    <location>
        <begin position="212"/>
        <end position="246"/>
    </location>
</feature>
<feature type="transmembrane region" description="Helical; Name=6" evidence="2">
    <location>
        <begin position="247"/>
        <end position="267"/>
    </location>
</feature>
<feature type="topological domain" description="Extracellular" evidence="2">
    <location>
        <begin position="268"/>
        <end position="281"/>
    </location>
</feature>
<feature type="transmembrane region" description="Helical; Name=7" evidence="2">
    <location>
        <begin position="282"/>
        <end position="302"/>
    </location>
</feature>
<feature type="topological domain" description="Cytoplasmic" evidence="2">
    <location>
        <begin position="303"/>
        <end position="326"/>
    </location>
</feature>
<feature type="region of interest" description="Disordered" evidence="4">
    <location>
        <begin position="1"/>
        <end position="31"/>
    </location>
</feature>
<feature type="compositionally biased region" description="Basic residues" evidence="4">
    <location>
        <begin position="1"/>
        <end position="14"/>
    </location>
</feature>
<feature type="lipid moiety-binding region" description="S-palmitoyl cysteine" evidence="2">
    <location>
        <position position="316"/>
    </location>
</feature>
<feature type="glycosylation site" description="N-linked (GlcNAc...) asparagine" evidence="2">
    <location>
        <position position="2"/>
    </location>
</feature>
<feature type="glycosylation site" description="N-linked (GlcNAc...) asparagine" evidence="2">
    <location>
        <position position="15"/>
    </location>
</feature>
<feature type="glycosylation site" description="N-linked (GlcNAc...) asparagine" evidence="2">
    <location>
        <position position="94"/>
    </location>
</feature>
<feature type="glycosylation site" description="N-linked (GlcNAc...) asparagine" evidence="2">
    <location>
        <position position="108"/>
    </location>
</feature>
<feature type="disulfide bond" description="Interchain" evidence="3">
    <location>
        <position position="81"/>
    </location>
</feature>
<feature type="sequence conflict" description="In Ref. 1; AAL85494, 2; AAO24745 and 4; AAI63227/AAI63219." evidence="6" ref="1 2 4">
    <original>I</original>
    <variation>V</variation>
    <location>
        <position position="47"/>
    </location>
</feature>
<protein>
    <recommendedName>
        <fullName>Melanocortin receptor 4</fullName>
        <shortName>MC4-R</shortName>
    </recommendedName>
</protein>
<keyword id="KW-1003">Cell membrane</keyword>
<keyword id="KW-1015">Disulfide bond</keyword>
<keyword id="KW-0297">G-protein coupled receptor</keyword>
<keyword id="KW-0325">Glycoprotein</keyword>
<keyword id="KW-0449">Lipoprotein</keyword>
<keyword id="KW-0472">Membrane</keyword>
<keyword id="KW-0564">Palmitate</keyword>
<keyword id="KW-0675">Receptor</keyword>
<keyword id="KW-1185">Reference proteome</keyword>
<keyword id="KW-0807">Transducer</keyword>
<keyword id="KW-0812">Transmembrane</keyword>
<keyword id="KW-1133">Transmembrane helix</keyword>
<gene>
    <name type="primary">mc4r</name>
</gene>
<accession>B0V1P1</accession>
<accession>Q8JGW3</accession>
<comment type="function">
    <text evidence="5">Receptor specific to the heptapeptide core common to adrenocorticotropic hormone and alpha-, beta-, and gamma-MSH. Plays a central role in energy homeostasis and somatic growth. This receptor is mediated by G proteins that stimulate adenylate cyclase (cAMP).</text>
</comment>
<comment type="subunit">
    <text evidence="1 5">Homodimer; disulfide-linked, also forms higher order oligomers (By similarity). Interacts with mrap2a; decreasing ligand-sensitivity. Interacts with mrap2b; increasing ligand-sensitivity and generation of cAMP.</text>
</comment>
<comment type="subcellular location">
    <subcellularLocation>
        <location>Cell membrane</location>
        <topology>Multi-pass membrane protein</topology>
    </subcellularLocation>
</comment>
<comment type="similarity">
    <text evidence="3">Belongs to the G-protein coupled receptor 1 family.</text>
</comment>
<sequence length="326" mass="36435">MNTSHHHGLHHSFRNHSQGALPVGKPSHGDRGSASGCYEQLLISTEIFLTLGLVSLLENILVIAAIVKNKNLHSPMYFFICSLAVADLLVSVSNASETVVMALITGGNLTNRESIIKNMDNVFDSMICSSLLASIWSLLAIAVDRYITIFYALRYHNIMTQRRAGTIITCIWTFCTVSGVLFIVYSESTTVLICLISMFFTMLALMASLYVHMFLLARLHMKRIAALPGNGPIWQAANMKGAITITILLGVFVVCWAPFFLHLILMISCPRNPYCVCFMSHFNMYLILIMCNSVIDPLIYAFRSQEMRKTFKEICCCWYGLASLCV</sequence>
<organism>
    <name type="scientific">Danio rerio</name>
    <name type="common">Zebrafish</name>
    <name type="synonym">Brachydanio rerio</name>
    <dbReference type="NCBI Taxonomy" id="7955"/>
    <lineage>
        <taxon>Eukaryota</taxon>
        <taxon>Metazoa</taxon>
        <taxon>Chordata</taxon>
        <taxon>Craniata</taxon>
        <taxon>Vertebrata</taxon>
        <taxon>Euteleostomi</taxon>
        <taxon>Actinopterygii</taxon>
        <taxon>Neopterygii</taxon>
        <taxon>Teleostei</taxon>
        <taxon>Ostariophysi</taxon>
        <taxon>Cypriniformes</taxon>
        <taxon>Danionidae</taxon>
        <taxon>Danioninae</taxon>
        <taxon>Danio</taxon>
    </lineage>
</organism>
<dbReference type="EMBL" id="AY078989">
    <property type="protein sequence ID" value="AAL85494.1"/>
    <property type="molecule type" value="Genomic_DNA"/>
</dbReference>
<dbReference type="EMBL" id="AY161850">
    <property type="protein sequence ID" value="AAO24745.1"/>
    <property type="molecule type" value="Genomic_DNA"/>
</dbReference>
<dbReference type="EMBL" id="CR925777">
    <property type="status" value="NOT_ANNOTATED_CDS"/>
    <property type="molecule type" value="Genomic_DNA"/>
</dbReference>
<dbReference type="EMBL" id="BC163219">
    <property type="protein sequence ID" value="AAI63219.1"/>
    <property type="molecule type" value="mRNA"/>
</dbReference>
<dbReference type="EMBL" id="BC163227">
    <property type="protein sequence ID" value="AAI63227.1"/>
    <property type="molecule type" value="mRNA"/>
</dbReference>
<dbReference type="RefSeq" id="NP_775385.1">
    <property type="nucleotide sequence ID" value="NM_173278.1"/>
</dbReference>
<dbReference type="SMR" id="B0V1P1"/>
<dbReference type="FunCoup" id="B0V1P1">
    <property type="interactions" value="491"/>
</dbReference>
<dbReference type="STRING" id="7955.ENSDARP00000027547"/>
<dbReference type="GlyCosmos" id="B0V1P1">
    <property type="glycosylation" value="4 sites, No reported glycans"/>
</dbReference>
<dbReference type="PaxDb" id="7955-ENSDARP00000027547"/>
<dbReference type="Ensembl" id="ENSDART00000019555">
    <property type="protein sequence ID" value="ENSDARP00000027547"/>
    <property type="gene ID" value="ENSDARG00000015515"/>
</dbReference>
<dbReference type="GeneID" id="286833"/>
<dbReference type="KEGG" id="dre:286833"/>
<dbReference type="AGR" id="ZFIN:ZDB-GENE-021223-2"/>
<dbReference type="CTD" id="4160"/>
<dbReference type="ZFIN" id="ZDB-GENE-021223-2">
    <property type="gene designation" value="mc4r"/>
</dbReference>
<dbReference type="eggNOG" id="KOG3656">
    <property type="taxonomic scope" value="Eukaryota"/>
</dbReference>
<dbReference type="HOGENOM" id="CLU_009579_13_0_1"/>
<dbReference type="InParanoid" id="B0V1P1"/>
<dbReference type="OMA" id="CLCFMSH"/>
<dbReference type="OrthoDB" id="5970330at2759"/>
<dbReference type="PhylomeDB" id="B0V1P1"/>
<dbReference type="TreeFam" id="TF332646"/>
<dbReference type="Reactome" id="R-DRE-375276">
    <property type="pathway name" value="Peptide ligand-binding receptors"/>
</dbReference>
<dbReference type="PRO" id="PR:B0V1P1"/>
<dbReference type="Proteomes" id="UP000000437">
    <property type="component" value="Chromosome 2"/>
</dbReference>
<dbReference type="Bgee" id="ENSDARG00000015515">
    <property type="expression patterns" value="Expressed in mature ovarian follicle and 13 other cell types or tissues"/>
</dbReference>
<dbReference type="GO" id="GO:0005737">
    <property type="term" value="C:cytoplasm"/>
    <property type="evidence" value="ECO:0000318"/>
    <property type="project" value="GO_Central"/>
</dbReference>
<dbReference type="GO" id="GO:0005886">
    <property type="term" value="C:plasma membrane"/>
    <property type="evidence" value="ECO:0000318"/>
    <property type="project" value="GO_Central"/>
</dbReference>
<dbReference type="GO" id="GO:0004977">
    <property type="term" value="F:melanocortin receptor activity"/>
    <property type="evidence" value="ECO:0000314"/>
    <property type="project" value="UniProtKB"/>
</dbReference>
<dbReference type="GO" id="GO:0004980">
    <property type="term" value="F:melanocyte-stimulating hormone receptor activity"/>
    <property type="evidence" value="ECO:0000318"/>
    <property type="project" value="GO_Central"/>
</dbReference>
<dbReference type="GO" id="GO:0007189">
    <property type="term" value="P:adenylate cyclase-activating G protein-coupled receptor signaling pathway"/>
    <property type="evidence" value="ECO:0000314"/>
    <property type="project" value="ZFIN"/>
</dbReference>
<dbReference type="GO" id="GO:0097009">
    <property type="term" value="P:energy homeostasis"/>
    <property type="evidence" value="ECO:0000314"/>
    <property type="project" value="UniProtKB"/>
</dbReference>
<dbReference type="GO" id="GO:0006112">
    <property type="term" value="P:energy reserve metabolic process"/>
    <property type="evidence" value="ECO:0000314"/>
    <property type="project" value="UniProtKB"/>
</dbReference>
<dbReference type="GO" id="GO:2000252">
    <property type="term" value="P:negative regulation of feeding behavior"/>
    <property type="evidence" value="ECO:0000315"/>
    <property type="project" value="ZFIN"/>
</dbReference>
<dbReference type="GO" id="GO:0040008">
    <property type="term" value="P:regulation of growth"/>
    <property type="evidence" value="ECO:0000316"/>
    <property type="project" value="ZFIN"/>
</dbReference>
<dbReference type="GO" id="GO:0019222">
    <property type="term" value="P:regulation of metabolic process"/>
    <property type="evidence" value="ECO:0000318"/>
    <property type="project" value="GO_Central"/>
</dbReference>
<dbReference type="CDD" id="cd15353">
    <property type="entry name" value="7tmA_MC4R"/>
    <property type="match status" value="1"/>
</dbReference>
<dbReference type="FunFam" id="1.20.1070.10:FF:000077">
    <property type="entry name" value="Melanocortin receptor 4"/>
    <property type="match status" value="1"/>
</dbReference>
<dbReference type="Gene3D" id="1.20.1070.10">
    <property type="entry name" value="Rhodopsin 7-helix transmembrane proteins"/>
    <property type="match status" value="1"/>
</dbReference>
<dbReference type="InterPro" id="IPR000276">
    <property type="entry name" value="GPCR_Rhodpsn"/>
</dbReference>
<dbReference type="InterPro" id="IPR017452">
    <property type="entry name" value="GPCR_Rhodpsn_7TM"/>
</dbReference>
<dbReference type="InterPro" id="IPR001908">
    <property type="entry name" value="MC3-5R"/>
</dbReference>
<dbReference type="InterPro" id="IPR000155">
    <property type="entry name" value="Mcort_rcpt_4"/>
</dbReference>
<dbReference type="InterPro" id="IPR001671">
    <property type="entry name" value="Melcrt_ACTH_rcpt"/>
</dbReference>
<dbReference type="PANTHER" id="PTHR22750">
    <property type="entry name" value="G-PROTEIN COUPLED RECEPTOR"/>
    <property type="match status" value="1"/>
</dbReference>
<dbReference type="Pfam" id="PF00001">
    <property type="entry name" value="7tm_1"/>
    <property type="match status" value="1"/>
</dbReference>
<dbReference type="PRINTS" id="PR00237">
    <property type="entry name" value="GPCRRHODOPSN"/>
</dbReference>
<dbReference type="PRINTS" id="PR00534">
    <property type="entry name" value="MCRFAMILY"/>
</dbReference>
<dbReference type="PRINTS" id="PR00535">
    <property type="entry name" value="MELNOCORTINR"/>
</dbReference>
<dbReference type="PRINTS" id="PR01062">
    <property type="entry name" value="MELNOCORTN4R"/>
</dbReference>
<dbReference type="SMART" id="SM01381">
    <property type="entry name" value="7TM_GPCR_Srsx"/>
    <property type="match status" value="1"/>
</dbReference>
<dbReference type="SUPFAM" id="SSF81321">
    <property type="entry name" value="Family A G protein-coupled receptor-like"/>
    <property type="match status" value="1"/>
</dbReference>
<dbReference type="PROSITE" id="PS00237">
    <property type="entry name" value="G_PROTEIN_RECEP_F1_1"/>
    <property type="match status" value="1"/>
</dbReference>
<dbReference type="PROSITE" id="PS50262">
    <property type="entry name" value="G_PROTEIN_RECEP_F1_2"/>
    <property type="match status" value="1"/>
</dbReference>
<evidence type="ECO:0000250" key="1"/>
<evidence type="ECO:0000255" key="2"/>
<evidence type="ECO:0000255" key="3">
    <source>
        <dbReference type="PROSITE-ProRule" id="PRU00521"/>
    </source>
</evidence>
<evidence type="ECO:0000256" key="4">
    <source>
        <dbReference type="SAM" id="MobiDB-lite"/>
    </source>
</evidence>
<evidence type="ECO:0000269" key="5">
    <source>
    </source>
</evidence>
<evidence type="ECO:0000305" key="6"/>
<reference key="1">
    <citation type="journal article" date="2002" name="J. Neurochem.">
        <title>One melanocortin 4 and two melanocortin 5 receptors from zebrafish show remarkable conservation in structure and pharmacology.</title>
        <authorList>
            <person name="Ringholm A."/>
            <person name="Fredriksson R."/>
            <person name="Poliakova N."/>
            <person name="Yan Y.L."/>
            <person name="Postlethwait J.H."/>
            <person name="Larhammar D."/>
            <person name="Schioth H.B."/>
        </authorList>
    </citation>
    <scope>NUCLEOTIDE SEQUENCE [GENOMIC DNA]</scope>
</reference>
<reference key="2">
    <citation type="journal article" date="2003" name="Genomics">
        <title>The structure and evolution of the melanocortin and MCH receptors in fish and mammals.</title>
        <authorList>
            <person name="Logan D.W."/>
            <person name="Bryson-Richardson R.J."/>
            <person name="Pagan K.E."/>
            <person name="Taylor M.S."/>
            <person name="Currie P.D."/>
            <person name="Jackson I.J."/>
        </authorList>
    </citation>
    <scope>NUCLEOTIDE SEQUENCE [GENOMIC DNA]</scope>
</reference>
<reference key="3">
    <citation type="journal article" date="2013" name="Nature">
        <title>The zebrafish reference genome sequence and its relationship to the human genome.</title>
        <authorList>
            <person name="Howe K."/>
            <person name="Clark M.D."/>
            <person name="Torroja C.F."/>
            <person name="Torrance J."/>
            <person name="Berthelot C."/>
            <person name="Muffato M."/>
            <person name="Collins J.E."/>
            <person name="Humphray S."/>
            <person name="McLaren K."/>
            <person name="Matthews L."/>
            <person name="McLaren S."/>
            <person name="Sealy I."/>
            <person name="Caccamo M."/>
            <person name="Churcher C."/>
            <person name="Scott C."/>
            <person name="Barrett J.C."/>
            <person name="Koch R."/>
            <person name="Rauch G.J."/>
            <person name="White S."/>
            <person name="Chow W."/>
            <person name="Kilian B."/>
            <person name="Quintais L.T."/>
            <person name="Guerra-Assuncao J.A."/>
            <person name="Zhou Y."/>
            <person name="Gu Y."/>
            <person name="Yen J."/>
            <person name="Vogel J.H."/>
            <person name="Eyre T."/>
            <person name="Redmond S."/>
            <person name="Banerjee R."/>
            <person name="Chi J."/>
            <person name="Fu B."/>
            <person name="Langley E."/>
            <person name="Maguire S.F."/>
            <person name="Laird G.K."/>
            <person name="Lloyd D."/>
            <person name="Kenyon E."/>
            <person name="Donaldson S."/>
            <person name="Sehra H."/>
            <person name="Almeida-King J."/>
            <person name="Loveland J."/>
            <person name="Trevanion S."/>
            <person name="Jones M."/>
            <person name="Quail M."/>
            <person name="Willey D."/>
            <person name="Hunt A."/>
            <person name="Burton J."/>
            <person name="Sims S."/>
            <person name="McLay K."/>
            <person name="Plumb B."/>
            <person name="Davis J."/>
            <person name="Clee C."/>
            <person name="Oliver K."/>
            <person name="Clark R."/>
            <person name="Riddle C."/>
            <person name="Elliot D."/>
            <person name="Threadgold G."/>
            <person name="Harden G."/>
            <person name="Ware D."/>
            <person name="Begum S."/>
            <person name="Mortimore B."/>
            <person name="Kerry G."/>
            <person name="Heath P."/>
            <person name="Phillimore B."/>
            <person name="Tracey A."/>
            <person name="Corby N."/>
            <person name="Dunn M."/>
            <person name="Johnson C."/>
            <person name="Wood J."/>
            <person name="Clark S."/>
            <person name="Pelan S."/>
            <person name="Griffiths G."/>
            <person name="Smith M."/>
            <person name="Glithero R."/>
            <person name="Howden P."/>
            <person name="Barker N."/>
            <person name="Lloyd C."/>
            <person name="Stevens C."/>
            <person name="Harley J."/>
            <person name="Holt K."/>
            <person name="Panagiotidis G."/>
            <person name="Lovell J."/>
            <person name="Beasley H."/>
            <person name="Henderson C."/>
            <person name="Gordon D."/>
            <person name="Auger K."/>
            <person name="Wright D."/>
            <person name="Collins J."/>
            <person name="Raisen C."/>
            <person name="Dyer L."/>
            <person name="Leung K."/>
            <person name="Robertson L."/>
            <person name="Ambridge K."/>
            <person name="Leongamornlert D."/>
            <person name="McGuire S."/>
            <person name="Gilderthorp R."/>
            <person name="Griffiths C."/>
            <person name="Manthravadi D."/>
            <person name="Nichol S."/>
            <person name="Barker G."/>
            <person name="Whitehead S."/>
            <person name="Kay M."/>
            <person name="Brown J."/>
            <person name="Murnane C."/>
            <person name="Gray E."/>
            <person name="Humphries M."/>
            <person name="Sycamore N."/>
            <person name="Barker D."/>
            <person name="Saunders D."/>
            <person name="Wallis J."/>
            <person name="Babbage A."/>
            <person name="Hammond S."/>
            <person name="Mashreghi-Mohammadi M."/>
            <person name="Barr L."/>
            <person name="Martin S."/>
            <person name="Wray P."/>
            <person name="Ellington A."/>
            <person name="Matthews N."/>
            <person name="Ellwood M."/>
            <person name="Woodmansey R."/>
            <person name="Clark G."/>
            <person name="Cooper J."/>
            <person name="Tromans A."/>
            <person name="Grafham D."/>
            <person name="Skuce C."/>
            <person name="Pandian R."/>
            <person name="Andrews R."/>
            <person name="Harrison E."/>
            <person name="Kimberley A."/>
            <person name="Garnett J."/>
            <person name="Fosker N."/>
            <person name="Hall R."/>
            <person name="Garner P."/>
            <person name="Kelly D."/>
            <person name="Bird C."/>
            <person name="Palmer S."/>
            <person name="Gehring I."/>
            <person name="Berger A."/>
            <person name="Dooley C.M."/>
            <person name="Ersan-Urun Z."/>
            <person name="Eser C."/>
            <person name="Geiger H."/>
            <person name="Geisler M."/>
            <person name="Karotki L."/>
            <person name="Kirn A."/>
            <person name="Konantz J."/>
            <person name="Konantz M."/>
            <person name="Oberlander M."/>
            <person name="Rudolph-Geiger S."/>
            <person name="Teucke M."/>
            <person name="Lanz C."/>
            <person name="Raddatz G."/>
            <person name="Osoegawa K."/>
            <person name="Zhu B."/>
            <person name="Rapp A."/>
            <person name="Widaa S."/>
            <person name="Langford C."/>
            <person name="Yang F."/>
            <person name="Schuster S.C."/>
            <person name="Carter N.P."/>
            <person name="Harrow J."/>
            <person name="Ning Z."/>
            <person name="Herrero J."/>
            <person name="Searle S.M."/>
            <person name="Enright A."/>
            <person name="Geisler R."/>
            <person name="Plasterk R.H."/>
            <person name="Lee C."/>
            <person name="Westerfield M."/>
            <person name="de Jong P.J."/>
            <person name="Zon L.I."/>
            <person name="Postlethwait J.H."/>
            <person name="Nusslein-Volhard C."/>
            <person name="Hubbard T.J."/>
            <person name="Roest Crollius H."/>
            <person name="Rogers J."/>
            <person name="Stemple D.L."/>
        </authorList>
    </citation>
    <scope>NUCLEOTIDE SEQUENCE [LARGE SCALE GENOMIC DNA]</scope>
    <source>
        <strain>Tuebingen</strain>
    </source>
</reference>
<reference key="4">
    <citation type="submission" date="2008-04" db="EMBL/GenBank/DDBJ databases">
        <authorList>
            <consortium name="NIH - Zebrafish Gene Collection (ZGC) project"/>
        </authorList>
    </citation>
    <scope>NUCLEOTIDE SEQUENCE [LARGE SCALE MRNA]</scope>
</reference>
<reference key="5">
    <citation type="journal article" date="2013" name="Science">
        <title>Developmental control of the melanocortin-4 receptor by MRAP2 proteins in zebrafish.</title>
        <authorList>
            <person name="Sebag J.A."/>
            <person name="Zhang C."/>
            <person name="Hinkle P.M."/>
            <person name="Bradshaw A.M."/>
            <person name="Cone R.D."/>
        </authorList>
    </citation>
    <scope>FUNCTION</scope>
    <scope>INTERACTION WITH MRAP2A AND MRAP2B</scope>
</reference>
<proteinExistence type="evidence at protein level"/>